<gene>
    <name type="ORF">SPBC115.02c</name>
</gene>
<proteinExistence type="inferred from homology"/>
<keyword id="KW-0067">ATP-binding</keyword>
<keyword id="KW-0547">Nucleotide-binding</keyword>
<keyword id="KW-1185">Reference proteome</keyword>
<evidence type="ECO:0000255" key="1"/>
<evidence type="ECO:0000305" key="2"/>
<reference key="1">
    <citation type="journal article" date="2002" name="Nature">
        <title>The genome sequence of Schizosaccharomyces pombe.</title>
        <authorList>
            <person name="Wood V."/>
            <person name="Gwilliam R."/>
            <person name="Rajandream M.A."/>
            <person name="Lyne M.H."/>
            <person name="Lyne R."/>
            <person name="Stewart A."/>
            <person name="Sgouros J.G."/>
            <person name="Peat N."/>
            <person name="Hayles J."/>
            <person name="Baker S.G."/>
            <person name="Basham D."/>
            <person name="Bowman S."/>
            <person name="Brooks K."/>
            <person name="Brown D."/>
            <person name="Brown S."/>
            <person name="Chillingworth T."/>
            <person name="Churcher C.M."/>
            <person name="Collins M."/>
            <person name="Connor R."/>
            <person name="Cronin A."/>
            <person name="Davis P."/>
            <person name="Feltwell T."/>
            <person name="Fraser A."/>
            <person name="Gentles S."/>
            <person name="Goble A."/>
            <person name="Hamlin N."/>
            <person name="Harris D.E."/>
            <person name="Hidalgo J."/>
            <person name="Hodgson G."/>
            <person name="Holroyd S."/>
            <person name="Hornsby T."/>
            <person name="Howarth S."/>
            <person name="Huckle E.J."/>
            <person name="Hunt S."/>
            <person name="Jagels K."/>
            <person name="James K.D."/>
            <person name="Jones L."/>
            <person name="Jones M."/>
            <person name="Leather S."/>
            <person name="McDonald S."/>
            <person name="McLean J."/>
            <person name="Mooney P."/>
            <person name="Moule S."/>
            <person name="Mungall K.L."/>
            <person name="Murphy L.D."/>
            <person name="Niblett D."/>
            <person name="Odell C."/>
            <person name="Oliver K."/>
            <person name="O'Neil S."/>
            <person name="Pearson D."/>
            <person name="Quail M.A."/>
            <person name="Rabbinowitsch E."/>
            <person name="Rutherford K.M."/>
            <person name="Rutter S."/>
            <person name="Saunders D."/>
            <person name="Seeger K."/>
            <person name="Sharp S."/>
            <person name="Skelton J."/>
            <person name="Simmonds M.N."/>
            <person name="Squares R."/>
            <person name="Squares S."/>
            <person name="Stevens K."/>
            <person name="Taylor K."/>
            <person name="Taylor R.G."/>
            <person name="Tivey A."/>
            <person name="Walsh S.V."/>
            <person name="Warren T."/>
            <person name="Whitehead S."/>
            <person name="Woodward J.R."/>
            <person name="Volckaert G."/>
            <person name="Aert R."/>
            <person name="Robben J."/>
            <person name="Grymonprez B."/>
            <person name="Weltjens I."/>
            <person name="Vanstreels E."/>
            <person name="Rieger M."/>
            <person name="Schaefer M."/>
            <person name="Mueller-Auer S."/>
            <person name="Gabel C."/>
            <person name="Fuchs M."/>
            <person name="Duesterhoeft A."/>
            <person name="Fritzc C."/>
            <person name="Holzer E."/>
            <person name="Moestl D."/>
            <person name="Hilbert H."/>
            <person name="Borzym K."/>
            <person name="Langer I."/>
            <person name="Beck A."/>
            <person name="Lehrach H."/>
            <person name="Reinhardt R."/>
            <person name="Pohl T.M."/>
            <person name="Eger P."/>
            <person name="Zimmermann W."/>
            <person name="Wedler H."/>
            <person name="Wambutt R."/>
            <person name="Purnelle B."/>
            <person name="Goffeau A."/>
            <person name="Cadieu E."/>
            <person name="Dreano S."/>
            <person name="Gloux S."/>
            <person name="Lelaure V."/>
            <person name="Mottier S."/>
            <person name="Galibert F."/>
            <person name="Aves S.J."/>
            <person name="Xiang Z."/>
            <person name="Hunt C."/>
            <person name="Moore K."/>
            <person name="Hurst S.M."/>
            <person name="Lucas M."/>
            <person name="Rochet M."/>
            <person name="Gaillardin C."/>
            <person name="Tallada V.A."/>
            <person name="Garzon A."/>
            <person name="Thode G."/>
            <person name="Daga R.R."/>
            <person name="Cruzado L."/>
            <person name="Jimenez J."/>
            <person name="Sanchez M."/>
            <person name="del Rey F."/>
            <person name="Benito J."/>
            <person name="Dominguez A."/>
            <person name="Revuelta J.L."/>
            <person name="Moreno S."/>
            <person name="Armstrong J."/>
            <person name="Forsburg S.L."/>
            <person name="Cerutti L."/>
            <person name="Lowe T."/>
            <person name="McCombie W.R."/>
            <person name="Paulsen I."/>
            <person name="Potashkin J."/>
            <person name="Shpakovski G.V."/>
            <person name="Ussery D."/>
            <person name="Barrell B.G."/>
            <person name="Nurse P."/>
        </authorList>
    </citation>
    <scope>NUCLEOTIDE SEQUENCE [LARGE SCALE GENOMIC DNA]</scope>
    <source>
        <strain>972 / ATCC 24843</strain>
    </source>
</reference>
<dbReference type="EMBL" id="CU329671">
    <property type="protein sequence ID" value="CAA17914.1"/>
    <property type="molecule type" value="Genomic_DNA"/>
</dbReference>
<dbReference type="PIR" id="T39297">
    <property type="entry name" value="T39297"/>
</dbReference>
<dbReference type="BioGRID" id="276631">
    <property type="interactions" value="9"/>
</dbReference>
<dbReference type="FunCoup" id="O42895">
    <property type="interactions" value="520"/>
</dbReference>
<dbReference type="STRING" id="284812.O42895"/>
<dbReference type="PaxDb" id="4896-SPBC115.02c.1"/>
<dbReference type="EnsemblFungi" id="SPBC115.02c.1">
    <property type="protein sequence ID" value="SPBC115.02c.1:pep"/>
    <property type="gene ID" value="SPBC115.02c"/>
</dbReference>
<dbReference type="KEGG" id="spo:2540093"/>
<dbReference type="PomBase" id="SPBC115.02c"/>
<dbReference type="VEuPathDB" id="FungiDB:SPBC115.02c"/>
<dbReference type="eggNOG" id="KOG2383">
    <property type="taxonomic scope" value="Eukaryota"/>
</dbReference>
<dbReference type="HOGENOM" id="CLU_008681_1_1_1"/>
<dbReference type="InParanoid" id="O42895"/>
<dbReference type="OMA" id="ARRFINM"/>
<dbReference type="PhylomeDB" id="O42895"/>
<dbReference type="PRO" id="PR:O42895"/>
<dbReference type="Proteomes" id="UP000002485">
    <property type="component" value="Chromosome II"/>
</dbReference>
<dbReference type="GO" id="GO:0005737">
    <property type="term" value="C:cytoplasm"/>
    <property type="evidence" value="ECO:0000318"/>
    <property type="project" value="GO_Central"/>
</dbReference>
<dbReference type="GO" id="GO:0005739">
    <property type="term" value="C:mitochondrion"/>
    <property type="evidence" value="ECO:0007005"/>
    <property type="project" value="PomBase"/>
</dbReference>
<dbReference type="GO" id="GO:0005524">
    <property type="term" value="F:ATP binding"/>
    <property type="evidence" value="ECO:0007669"/>
    <property type="project" value="UniProtKB-KW"/>
</dbReference>
<dbReference type="GO" id="GO:0016887">
    <property type="term" value="F:ATP hydrolysis activity"/>
    <property type="evidence" value="ECO:0000318"/>
    <property type="project" value="GO_Central"/>
</dbReference>
<dbReference type="GO" id="GO:0006515">
    <property type="term" value="P:protein quality control for misfolded or incompletely synthesized proteins"/>
    <property type="evidence" value="ECO:0000318"/>
    <property type="project" value="GO_Central"/>
</dbReference>
<dbReference type="FunFam" id="3.40.50.300:FF:004297">
    <property type="entry name" value="Chromosome 1, whole genome shotgun sequence"/>
    <property type="match status" value="1"/>
</dbReference>
<dbReference type="Gene3D" id="3.40.50.300">
    <property type="entry name" value="P-loop containing nucleotide triphosphate hydrolases"/>
    <property type="match status" value="1"/>
</dbReference>
<dbReference type="InterPro" id="IPR005654">
    <property type="entry name" value="ATPase_AFG1-like"/>
</dbReference>
<dbReference type="InterPro" id="IPR027417">
    <property type="entry name" value="P-loop_NTPase"/>
</dbReference>
<dbReference type="NCBIfam" id="NF040713">
    <property type="entry name" value="ZapE"/>
    <property type="match status" value="1"/>
</dbReference>
<dbReference type="PANTHER" id="PTHR12169:SF6">
    <property type="entry name" value="AFG1-LIKE ATPASE"/>
    <property type="match status" value="1"/>
</dbReference>
<dbReference type="PANTHER" id="PTHR12169">
    <property type="entry name" value="ATPASE N2B"/>
    <property type="match status" value="1"/>
</dbReference>
<dbReference type="Pfam" id="PF03969">
    <property type="entry name" value="AFG1_ATPase"/>
    <property type="match status" value="1"/>
</dbReference>
<dbReference type="SUPFAM" id="SSF52540">
    <property type="entry name" value="P-loop containing nucleoside triphosphate hydrolases"/>
    <property type="match status" value="1"/>
</dbReference>
<feature type="chain" id="PRO_0000279525" description="Uncharacterized protein C115.02c">
    <location>
        <begin position="1"/>
        <end position="454"/>
    </location>
</feature>
<feature type="binding site" evidence="1">
    <location>
        <begin position="125"/>
        <end position="132"/>
    </location>
    <ligand>
        <name>ATP</name>
        <dbReference type="ChEBI" id="CHEBI:30616"/>
    </ligand>
</feature>
<sequence length="454" mass="51552">MLQVLRVSAPCFAFVDTIGSIGVCRVVRFTTFHNTPIEVYNKKVNDGVWKRDPYQETAVKAINRLYTELESYTQPPITQDSMPAEKGSILSWISPLKKMFSRKKSPTLTSSLPVPGMPKGIYLYGDVGCGKTALMDLFYHNLPPNVTRSQRIHFHAFMMQVHRTSHDLQDRYGFEIDFIDHIASGIAKETTVLCFDELQVTDVADALLLRRLFEALMKYGVVIFITSNRAPSDLYKNGIQRESFIPCIKLLEHRLQVICLDSPNDYRRLKSKTEDTYLYPANSPEVKKALENWFLCYADEKDPAHQDEVEVFGRKIIVPKASGNVAWFTFEQLCGEPKSAADYLSLASRYHVFIVSDIPKLSIESKDLIHRFITFIDALYDTHGKLILSSEVPVQEIYPTAPSEVLSSTADPAAKGKIESHYHGAFGGIEEVFTFTRCLSRLSEMKKQSWIHSP</sequence>
<protein>
    <recommendedName>
        <fullName>Uncharacterized protein C115.02c</fullName>
    </recommendedName>
</protein>
<comment type="similarity">
    <text evidence="2">Belongs to the AFG1 ATPase family.</text>
</comment>
<accession>O42895</accession>
<organism>
    <name type="scientific">Schizosaccharomyces pombe (strain 972 / ATCC 24843)</name>
    <name type="common">Fission yeast</name>
    <dbReference type="NCBI Taxonomy" id="284812"/>
    <lineage>
        <taxon>Eukaryota</taxon>
        <taxon>Fungi</taxon>
        <taxon>Dikarya</taxon>
        <taxon>Ascomycota</taxon>
        <taxon>Taphrinomycotina</taxon>
        <taxon>Schizosaccharomycetes</taxon>
        <taxon>Schizosaccharomycetales</taxon>
        <taxon>Schizosaccharomycetaceae</taxon>
        <taxon>Schizosaccharomyces</taxon>
    </lineage>
</organism>
<name>YBQ2_SCHPO</name>